<dbReference type="EMBL" id="BA000012">
    <property type="protein sequence ID" value="BAB47928.1"/>
    <property type="molecule type" value="Genomic_DNA"/>
</dbReference>
<dbReference type="RefSeq" id="WP_006205445.1">
    <property type="nucleotide sequence ID" value="NC_002678.2"/>
</dbReference>
<dbReference type="SMR" id="Q98N35"/>
<dbReference type="GeneID" id="90991560"/>
<dbReference type="KEGG" id="mlo:mlr0323"/>
<dbReference type="eggNOG" id="COG0099">
    <property type="taxonomic scope" value="Bacteria"/>
</dbReference>
<dbReference type="HOGENOM" id="CLU_103849_1_2_5"/>
<dbReference type="Proteomes" id="UP000000552">
    <property type="component" value="Chromosome"/>
</dbReference>
<dbReference type="GO" id="GO:0005829">
    <property type="term" value="C:cytosol"/>
    <property type="evidence" value="ECO:0007669"/>
    <property type="project" value="TreeGrafter"/>
</dbReference>
<dbReference type="GO" id="GO:0015935">
    <property type="term" value="C:small ribosomal subunit"/>
    <property type="evidence" value="ECO:0007669"/>
    <property type="project" value="TreeGrafter"/>
</dbReference>
<dbReference type="GO" id="GO:0019843">
    <property type="term" value="F:rRNA binding"/>
    <property type="evidence" value="ECO:0007669"/>
    <property type="project" value="UniProtKB-UniRule"/>
</dbReference>
<dbReference type="GO" id="GO:0003735">
    <property type="term" value="F:structural constituent of ribosome"/>
    <property type="evidence" value="ECO:0007669"/>
    <property type="project" value="InterPro"/>
</dbReference>
<dbReference type="GO" id="GO:0000049">
    <property type="term" value="F:tRNA binding"/>
    <property type="evidence" value="ECO:0007669"/>
    <property type="project" value="UniProtKB-UniRule"/>
</dbReference>
<dbReference type="GO" id="GO:0006412">
    <property type="term" value="P:translation"/>
    <property type="evidence" value="ECO:0007669"/>
    <property type="project" value="UniProtKB-UniRule"/>
</dbReference>
<dbReference type="FunFam" id="1.10.8.50:FF:000001">
    <property type="entry name" value="30S ribosomal protein S13"/>
    <property type="match status" value="1"/>
</dbReference>
<dbReference type="FunFam" id="4.10.910.10:FF:000001">
    <property type="entry name" value="30S ribosomal protein S13"/>
    <property type="match status" value="1"/>
</dbReference>
<dbReference type="Gene3D" id="1.10.8.50">
    <property type="match status" value="1"/>
</dbReference>
<dbReference type="Gene3D" id="4.10.910.10">
    <property type="entry name" value="30s ribosomal protein s13, domain 2"/>
    <property type="match status" value="1"/>
</dbReference>
<dbReference type="HAMAP" id="MF_01315">
    <property type="entry name" value="Ribosomal_uS13"/>
    <property type="match status" value="1"/>
</dbReference>
<dbReference type="InterPro" id="IPR027437">
    <property type="entry name" value="Rbsml_uS13_C"/>
</dbReference>
<dbReference type="InterPro" id="IPR001892">
    <property type="entry name" value="Ribosomal_uS13"/>
</dbReference>
<dbReference type="InterPro" id="IPR010979">
    <property type="entry name" value="Ribosomal_uS13-like_H2TH"/>
</dbReference>
<dbReference type="InterPro" id="IPR019980">
    <property type="entry name" value="Ribosomal_uS13_bac-type"/>
</dbReference>
<dbReference type="InterPro" id="IPR018269">
    <property type="entry name" value="Ribosomal_uS13_CS"/>
</dbReference>
<dbReference type="NCBIfam" id="TIGR03631">
    <property type="entry name" value="uS13_bact"/>
    <property type="match status" value="1"/>
</dbReference>
<dbReference type="PANTHER" id="PTHR10871">
    <property type="entry name" value="30S RIBOSOMAL PROTEIN S13/40S RIBOSOMAL PROTEIN S18"/>
    <property type="match status" value="1"/>
</dbReference>
<dbReference type="PANTHER" id="PTHR10871:SF1">
    <property type="entry name" value="SMALL RIBOSOMAL SUBUNIT PROTEIN US13M"/>
    <property type="match status" value="1"/>
</dbReference>
<dbReference type="Pfam" id="PF00416">
    <property type="entry name" value="Ribosomal_S13"/>
    <property type="match status" value="1"/>
</dbReference>
<dbReference type="PIRSF" id="PIRSF002134">
    <property type="entry name" value="Ribosomal_S13"/>
    <property type="match status" value="1"/>
</dbReference>
<dbReference type="SUPFAM" id="SSF46946">
    <property type="entry name" value="S13-like H2TH domain"/>
    <property type="match status" value="1"/>
</dbReference>
<dbReference type="PROSITE" id="PS00646">
    <property type="entry name" value="RIBOSOMAL_S13_1"/>
    <property type="match status" value="1"/>
</dbReference>
<dbReference type="PROSITE" id="PS50159">
    <property type="entry name" value="RIBOSOMAL_S13_2"/>
    <property type="match status" value="1"/>
</dbReference>
<name>RS13_RHILO</name>
<sequence>MARIAGVNIPTNKRVVIALQYIHGIGKKFAQEIVDKVGIPAERRVNQLTDAEVLQIRETIDRDYQVEGDLRREVSMNIKRLMDLGCYRGLRHRRSLPVRGQRTHTNARTRKGPAKSIAGKKK</sequence>
<accession>Q98N35</accession>
<proteinExistence type="inferred from homology"/>
<reference key="1">
    <citation type="journal article" date="2000" name="DNA Res.">
        <title>Complete genome structure of the nitrogen-fixing symbiotic bacterium Mesorhizobium loti.</title>
        <authorList>
            <person name="Kaneko T."/>
            <person name="Nakamura Y."/>
            <person name="Sato S."/>
            <person name="Asamizu E."/>
            <person name="Kato T."/>
            <person name="Sasamoto S."/>
            <person name="Watanabe A."/>
            <person name="Idesawa K."/>
            <person name="Ishikawa A."/>
            <person name="Kawashima K."/>
            <person name="Kimura T."/>
            <person name="Kishida Y."/>
            <person name="Kiyokawa C."/>
            <person name="Kohara M."/>
            <person name="Matsumoto M."/>
            <person name="Matsuno A."/>
            <person name="Mochizuki Y."/>
            <person name="Nakayama S."/>
            <person name="Nakazaki N."/>
            <person name="Shimpo S."/>
            <person name="Sugimoto M."/>
            <person name="Takeuchi C."/>
            <person name="Yamada M."/>
            <person name="Tabata S."/>
        </authorList>
    </citation>
    <scope>NUCLEOTIDE SEQUENCE [LARGE SCALE GENOMIC DNA]</scope>
    <source>
        <strain>LMG 29417 / CECT 9101 / MAFF 303099</strain>
    </source>
</reference>
<evidence type="ECO:0000255" key="1">
    <source>
        <dbReference type="HAMAP-Rule" id="MF_01315"/>
    </source>
</evidence>
<evidence type="ECO:0000256" key="2">
    <source>
        <dbReference type="SAM" id="MobiDB-lite"/>
    </source>
</evidence>
<evidence type="ECO:0000305" key="3"/>
<comment type="function">
    <text evidence="1">Located at the top of the head of the 30S subunit, it contacts several helices of the 16S rRNA. In the 70S ribosome it contacts the 23S rRNA (bridge B1a) and protein L5 of the 50S subunit (bridge B1b), connecting the 2 subunits; these bridges are implicated in subunit movement. Contacts the tRNAs in the A and P-sites.</text>
</comment>
<comment type="subunit">
    <text evidence="1">Part of the 30S ribosomal subunit. Forms a loose heterodimer with protein S19. Forms two bridges to the 50S subunit in the 70S ribosome.</text>
</comment>
<comment type="similarity">
    <text evidence="1">Belongs to the universal ribosomal protein uS13 family.</text>
</comment>
<protein>
    <recommendedName>
        <fullName evidence="1">Small ribosomal subunit protein uS13</fullName>
    </recommendedName>
    <alternativeName>
        <fullName evidence="3">30S ribosomal protein S13</fullName>
    </alternativeName>
</protein>
<keyword id="KW-0687">Ribonucleoprotein</keyword>
<keyword id="KW-0689">Ribosomal protein</keyword>
<keyword id="KW-0694">RNA-binding</keyword>
<keyword id="KW-0699">rRNA-binding</keyword>
<keyword id="KW-0820">tRNA-binding</keyword>
<gene>
    <name evidence="1" type="primary">rpsM</name>
    <name type="ordered locus">mlr0323</name>
</gene>
<feature type="chain" id="PRO_0000132125" description="Small ribosomal subunit protein uS13">
    <location>
        <begin position="1"/>
        <end position="122"/>
    </location>
</feature>
<feature type="region of interest" description="Disordered" evidence="2">
    <location>
        <begin position="95"/>
        <end position="122"/>
    </location>
</feature>
<organism>
    <name type="scientific">Mesorhizobium japonicum (strain LMG 29417 / CECT 9101 / MAFF 303099)</name>
    <name type="common">Mesorhizobium loti (strain MAFF 303099)</name>
    <dbReference type="NCBI Taxonomy" id="266835"/>
    <lineage>
        <taxon>Bacteria</taxon>
        <taxon>Pseudomonadati</taxon>
        <taxon>Pseudomonadota</taxon>
        <taxon>Alphaproteobacteria</taxon>
        <taxon>Hyphomicrobiales</taxon>
        <taxon>Phyllobacteriaceae</taxon>
        <taxon>Mesorhizobium</taxon>
    </lineage>
</organism>